<accession>A7FFU6</accession>
<comment type="function">
    <text evidence="1">Specifically catalyzes the cleavage of the D-lactyl ether substituent of MurNAc 6-phosphate, producing GlcNAc 6-phosphate and D-lactate. Together with AnmK, is also required for the utilization of anhydro-N-acetylmuramic acid (anhMurNAc) either imported from the medium or derived from its own cell wall murein, and thus plays a role in cell wall recycling.</text>
</comment>
<comment type="catalytic activity">
    <reaction evidence="1">
        <text>N-acetyl-D-muramate 6-phosphate + H2O = N-acetyl-D-glucosamine 6-phosphate + (R)-lactate</text>
        <dbReference type="Rhea" id="RHEA:26410"/>
        <dbReference type="ChEBI" id="CHEBI:15377"/>
        <dbReference type="ChEBI" id="CHEBI:16004"/>
        <dbReference type="ChEBI" id="CHEBI:57513"/>
        <dbReference type="ChEBI" id="CHEBI:58722"/>
        <dbReference type="EC" id="4.2.1.126"/>
    </reaction>
</comment>
<comment type="pathway">
    <text evidence="1">Amino-sugar metabolism; 1,6-anhydro-N-acetylmuramate degradation.</text>
</comment>
<comment type="pathway">
    <text evidence="1">Amino-sugar metabolism; N-acetylmuramate degradation.</text>
</comment>
<comment type="pathway">
    <text evidence="1">Cell wall biogenesis; peptidoglycan recycling.</text>
</comment>
<comment type="subunit">
    <text evidence="1">Homodimer.</text>
</comment>
<comment type="induction">
    <text evidence="1">Induced by MurNAc 6-phosphate that releases the repressor MurR from the DNA. Repressed by MurR in the absence of MurNAc 6-phosphate.</text>
</comment>
<comment type="miscellaneous">
    <text evidence="1">A lyase-type mechanism (elimination/hydration) is suggested for the cleavage of the lactyl ether bond of MurNAc 6-phosphate, with the formation of an alpha,beta-unsaturated aldehyde intermediate with (E)-stereochemistry, followed by the syn addition of water to give product.</text>
</comment>
<comment type="similarity">
    <text evidence="1">Belongs to the GCKR-like family. MurNAc-6-P etherase subfamily.</text>
</comment>
<sequence>MSLGALISESRNPATMELDKLSTLAMLTCINDEDRKVPDAIRLVLPAVAQAVDLAADALKQGGRLIYLGAGTSGRLGVLDASECPPTFGVPHGMVIGLIAGGPGALLKAVEGAEDDIALGMRDLQDLQLTATDMVVGLAASGRTPYVIGALRYARELGCPTAAISCNPDSPIAQEAQVAISPVVGPEALTGSTRMKSGTAQKLVLNMLSTGAMVKLGKVYQNLMVDVKATNVKLVDRACRIVVEATGVSRAEAEHALRQTDFEVKPAILMLLKGVSAEQARQDLRQHHGYLRAAL</sequence>
<proteinExistence type="inferred from homology"/>
<feature type="chain" id="PRO_1000057461" description="N-acetylmuramic acid 6-phosphate etherase">
    <location>
        <begin position="1"/>
        <end position="295"/>
    </location>
</feature>
<feature type="domain" description="SIS" evidence="1">
    <location>
        <begin position="55"/>
        <end position="218"/>
    </location>
</feature>
<feature type="active site" description="Proton donor" evidence="1">
    <location>
        <position position="83"/>
    </location>
</feature>
<feature type="active site" evidence="1">
    <location>
        <position position="114"/>
    </location>
</feature>
<dbReference type="EC" id="4.2.1.126" evidence="1"/>
<dbReference type="EMBL" id="CP000720">
    <property type="protein sequence ID" value="ABS47920.1"/>
    <property type="molecule type" value="Genomic_DNA"/>
</dbReference>
<dbReference type="RefSeq" id="WP_002211565.1">
    <property type="nucleotide sequence ID" value="NC_009708.1"/>
</dbReference>
<dbReference type="SMR" id="A7FFU6"/>
<dbReference type="GeneID" id="57975879"/>
<dbReference type="KEGG" id="ypi:YpsIP31758_1143"/>
<dbReference type="HOGENOM" id="CLU_049049_1_1_6"/>
<dbReference type="UniPathway" id="UPA00342"/>
<dbReference type="UniPathway" id="UPA00343"/>
<dbReference type="UniPathway" id="UPA00544"/>
<dbReference type="Proteomes" id="UP000002412">
    <property type="component" value="Chromosome"/>
</dbReference>
<dbReference type="GO" id="GO:0097367">
    <property type="term" value="F:carbohydrate derivative binding"/>
    <property type="evidence" value="ECO:0007669"/>
    <property type="project" value="InterPro"/>
</dbReference>
<dbReference type="GO" id="GO:0016835">
    <property type="term" value="F:carbon-oxygen lyase activity"/>
    <property type="evidence" value="ECO:0007669"/>
    <property type="project" value="UniProtKB-UniRule"/>
</dbReference>
<dbReference type="GO" id="GO:0016803">
    <property type="term" value="F:ether hydrolase activity"/>
    <property type="evidence" value="ECO:0007669"/>
    <property type="project" value="TreeGrafter"/>
</dbReference>
<dbReference type="GO" id="GO:0097175">
    <property type="term" value="P:1,6-anhydro-N-acetyl-beta-muramic acid catabolic process"/>
    <property type="evidence" value="ECO:0007669"/>
    <property type="project" value="UniProtKB-UniRule"/>
</dbReference>
<dbReference type="GO" id="GO:0046348">
    <property type="term" value="P:amino sugar catabolic process"/>
    <property type="evidence" value="ECO:0007669"/>
    <property type="project" value="InterPro"/>
</dbReference>
<dbReference type="GO" id="GO:0097173">
    <property type="term" value="P:N-acetylmuramic acid catabolic process"/>
    <property type="evidence" value="ECO:0007669"/>
    <property type="project" value="UniProtKB-UniPathway"/>
</dbReference>
<dbReference type="GO" id="GO:0009254">
    <property type="term" value="P:peptidoglycan turnover"/>
    <property type="evidence" value="ECO:0007669"/>
    <property type="project" value="UniProtKB-UniRule"/>
</dbReference>
<dbReference type="CDD" id="cd05007">
    <property type="entry name" value="SIS_Etherase"/>
    <property type="match status" value="1"/>
</dbReference>
<dbReference type="FunFam" id="1.10.8.1080:FF:000001">
    <property type="entry name" value="N-acetylmuramic acid 6-phosphate etherase"/>
    <property type="match status" value="1"/>
</dbReference>
<dbReference type="FunFam" id="3.40.50.10490:FF:000014">
    <property type="entry name" value="N-acetylmuramic acid 6-phosphate etherase"/>
    <property type="match status" value="1"/>
</dbReference>
<dbReference type="Gene3D" id="1.10.8.1080">
    <property type="match status" value="1"/>
</dbReference>
<dbReference type="Gene3D" id="3.40.50.10490">
    <property type="entry name" value="Glucose-6-phosphate isomerase like protein, domain 1"/>
    <property type="match status" value="1"/>
</dbReference>
<dbReference type="HAMAP" id="MF_00068">
    <property type="entry name" value="MurQ"/>
    <property type="match status" value="1"/>
</dbReference>
<dbReference type="InterPro" id="IPR005488">
    <property type="entry name" value="Etherase_MurQ"/>
</dbReference>
<dbReference type="InterPro" id="IPR005486">
    <property type="entry name" value="Glucokinase_regulatory_CS"/>
</dbReference>
<dbReference type="InterPro" id="IPR040190">
    <property type="entry name" value="MURQ/GCKR"/>
</dbReference>
<dbReference type="InterPro" id="IPR001347">
    <property type="entry name" value="SIS_dom"/>
</dbReference>
<dbReference type="InterPro" id="IPR046348">
    <property type="entry name" value="SIS_dom_sf"/>
</dbReference>
<dbReference type="InterPro" id="IPR009060">
    <property type="entry name" value="UBA-like_sf"/>
</dbReference>
<dbReference type="NCBIfam" id="TIGR00274">
    <property type="entry name" value="N-acetylmuramic acid 6-phosphate etherase"/>
    <property type="match status" value="1"/>
</dbReference>
<dbReference type="NCBIfam" id="NF003915">
    <property type="entry name" value="PRK05441.1"/>
    <property type="match status" value="1"/>
</dbReference>
<dbReference type="NCBIfam" id="NF009222">
    <property type="entry name" value="PRK12570.1"/>
    <property type="match status" value="1"/>
</dbReference>
<dbReference type="PANTHER" id="PTHR10088">
    <property type="entry name" value="GLUCOKINASE REGULATORY PROTEIN"/>
    <property type="match status" value="1"/>
</dbReference>
<dbReference type="PANTHER" id="PTHR10088:SF5">
    <property type="entry name" value="N-ACETYLMURAMIC ACID 6-PHOSPHATE ETHERASE"/>
    <property type="match status" value="1"/>
</dbReference>
<dbReference type="Pfam" id="PF20741">
    <property type="entry name" value="GKRP-like_C"/>
    <property type="match status" value="1"/>
</dbReference>
<dbReference type="Pfam" id="PF22645">
    <property type="entry name" value="GKRP_SIS_N"/>
    <property type="match status" value="1"/>
</dbReference>
<dbReference type="SUPFAM" id="SSF53697">
    <property type="entry name" value="SIS domain"/>
    <property type="match status" value="1"/>
</dbReference>
<dbReference type="SUPFAM" id="SSF46934">
    <property type="entry name" value="UBA-like"/>
    <property type="match status" value="1"/>
</dbReference>
<dbReference type="PROSITE" id="PS01272">
    <property type="entry name" value="GCKR"/>
    <property type="match status" value="1"/>
</dbReference>
<dbReference type="PROSITE" id="PS51464">
    <property type="entry name" value="SIS"/>
    <property type="match status" value="1"/>
</dbReference>
<protein>
    <recommendedName>
        <fullName evidence="1">N-acetylmuramic acid 6-phosphate etherase</fullName>
        <shortName evidence="1">MurNAc-6-P etherase</shortName>
        <ecNumber evidence="1">4.2.1.126</ecNumber>
    </recommendedName>
    <alternativeName>
        <fullName evidence="1">N-acetylmuramic acid 6-phosphate hydrolase</fullName>
    </alternativeName>
    <alternativeName>
        <fullName evidence="1">N-acetylmuramic acid 6-phosphate lyase</fullName>
    </alternativeName>
</protein>
<evidence type="ECO:0000255" key="1">
    <source>
        <dbReference type="HAMAP-Rule" id="MF_00068"/>
    </source>
</evidence>
<organism>
    <name type="scientific">Yersinia pseudotuberculosis serotype O:1b (strain IP 31758)</name>
    <dbReference type="NCBI Taxonomy" id="349747"/>
    <lineage>
        <taxon>Bacteria</taxon>
        <taxon>Pseudomonadati</taxon>
        <taxon>Pseudomonadota</taxon>
        <taxon>Gammaproteobacteria</taxon>
        <taxon>Enterobacterales</taxon>
        <taxon>Yersiniaceae</taxon>
        <taxon>Yersinia</taxon>
    </lineage>
</organism>
<keyword id="KW-0119">Carbohydrate metabolism</keyword>
<keyword id="KW-0456">Lyase</keyword>
<reference key="1">
    <citation type="journal article" date="2007" name="PLoS Genet.">
        <title>The complete genome sequence of Yersinia pseudotuberculosis IP31758, the causative agent of Far East scarlet-like fever.</title>
        <authorList>
            <person name="Eppinger M."/>
            <person name="Rosovitz M.J."/>
            <person name="Fricke W.F."/>
            <person name="Rasko D.A."/>
            <person name="Kokorina G."/>
            <person name="Fayolle C."/>
            <person name="Lindler L.E."/>
            <person name="Carniel E."/>
            <person name="Ravel J."/>
        </authorList>
    </citation>
    <scope>NUCLEOTIDE SEQUENCE [LARGE SCALE GENOMIC DNA]</scope>
    <source>
        <strain>IP 31758</strain>
    </source>
</reference>
<name>MURQ_YERP3</name>
<gene>
    <name evidence="1" type="primary">murQ</name>
    <name type="ordered locus">YpsIP31758_1143</name>
</gene>